<keyword id="KW-0025">Alternative splicing</keyword>
<keyword id="KW-0129">CBS domain</keyword>
<keyword id="KW-0963">Cytoplasm</keyword>
<keyword id="KW-0332">GMP biosynthesis</keyword>
<keyword id="KW-0479">Metal-binding</keyword>
<keyword id="KW-0520">NAD</keyword>
<keyword id="KW-0560">Oxidoreductase</keyword>
<keyword id="KW-0630">Potassium</keyword>
<keyword id="KW-0658">Purine biosynthesis</keyword>
<keyword id="KW-0677">Repeat</keyword>
<name>IMDH_TOXGO</name>
<dbReference type="EC" id="1.1.1.205" evidence="1"/>
<dbReference type="EMBL" id="AY663109">
    <property type="protein sequence ID" value="AAV73841.1"/>
    <property type="molecule type" value="mRNA"/>
</dbReference>
<dbReference type="EMBL" id="AY661469">
    <property type="protein sequence ID" value="AAV74388.1"/>
    <property type="molecule type" value="mRNA"/>
</dbReference>
<dbReference type="SMR" id="Q4VRV8"/>
<dbReference type="VEuPathDB" id="ToxoDB:TGARI_233110"/>
<dbReference type="VEuPathDB" id="ToxoDB:TGCAST_233110"/>
<dbReference type="VEuPathDB" id="ToxoDB:TGCOUG_233110A"/>
<dbReference type="VEuPathDB" id="ToxoDB:TGDOM2_233110"/>
<dbReference type="VEuPathDB" id="ToxoDB:TGFOU_233110"/>
<dbReference type="VEuPathDB" id="ToxoDB:TGGT1_233110"/>
<dbReference type="VEuPathDB" id="ToxoDB:TGMAS_233110"/>
<dbReference type="VEuPathDB" id="ToxoDB:TGME49_233110"/>
<dbReference type="VEuPathDB" id="ToxoDB:TGP89_233110A"/>
<dbReference type="VEuPathDB" id="ToxoDB:TGPRC2_426780"/>
<dbReference type="VEuPathDB" id="ToxoDB:TGRH88_077080"/>
<dbReference type="VEuPathDB" id="ToxoDB:TGRUB_233110"/>
<dbReference type="VEuPathDB" id="ToxoDB:TGVAND_233110"/>
<dbReference type="VEuPathDB" id="ToxoDB:TGVEG_233110"/>
<dbReference type="BRENDA" id="1.1.1.205">
    <property type="organism ID" value="6411"/>
</dbReference>
<dbReference type="SABIO-RK" id="Q4VRV8"/>
<dbReference type="UniPathway" id="UPA00601">
    <property type="reaction ID" value="UER00295"/>
</dbReference>
<dbReference type="GO" id="GO:0005737">
    <property type="term" value="C:cytoplasm"/>
    <property type="evidence" value="ECO:0007669"/>
    <property type="project" value="UniProtKB-SubCell"/>
</dbReference>
<dbReference type="GO" id="GO:0003938">
    <property type="term" value="F:IMP dehydrogenase activity"/>
    <property type="evidence" value="ECO:0007669"/>
    <property type="project" value="UniProtKB-UniRule"/>
</dbReference>
<dbReference type="GO" id="GO:0046872">
    <property type="term" value="F:metal ion binding"/>
    <property type="evidence" value="ECO:0007669"/>
    <property type="project" value="UniProtKB-UniRule"/>
</dbReference>
<dbReference type="GO" id="GO:0000166">
    <property type="term" value="F:nucleotide binding"/>
    <property type="evidence" value="ECO:0007669"/>
    <property type="project" value="UniProtKB-UniRule"/>
</dbReference>
<dbReference type="GO" id="GO:0006177">
    <property type="term" value="P:GMP biosynthetic process"/>
    <property type="evidence" value="ECO:0007669"/>
    <property type="project" value="UniProtKB-UniRule"/>
</dbReference>
<dbReference type="GO" id="GO:0006183">
    <property type="term" value="P:GTP biosynthetic process"/>
    <property type="evidence" value="ECO:0007669"/>
    <property type="project" value="TreeGrafter"/>
</dbReference>
<dbReference type="CDD" id="cd04601">
    <property type="entry name" value="CBS_pair_IMPDH"/>
    <property type="match status" value="1"/>
</dbReference>
<dbReference type="CDD" id="cd00381">
    <property type="entry name" value="IMPDH"/>
    <property type="match status" value="1"/>
</dbReference>
<dbReference type="FunFam" id="3.20.20.70:FF:000086">
    <property type="entry name" value="IMP dehydrogenase, putative"/>
    <property type="match status" value="1"/>
</dbReference>
<dbReference type="Gene3D" id="3.20.20.70">
    <property type="entry name" value="Aldolase class I"/>
    <property type="match status" value="2"/>
</dbReference>
<dbReference type="HAMAP" id="MF_01964">
    <property type="entry name" value="IMPDH"/>
    <property type="match status" value="1"/>
</dbReference>
<dbReference type="InterPro" id="IPR013785">
    <property type="entry name" value="Aldolase_TIM"/>
</dbReference>
<dbReference type="InterPro" id="IPR000644">
    <property type="entry name" value="CBS_dom"/>
</dbReference>
<dbReference type="InterPro" id="IPR046342">
    <property type="entry name" value="CBS_dom_sf"/>
</dbReference>
<dbReference type="InterPro" id="IPR005990">
    <property type="entry name" value="IMP_DH"/>
</dbReference>
<dbReference type="InterPro" id="IPR015875">
    <property type="entry name" value="IMP_DH/GMP_Rdtase_CS"/>
</dbReference>
<dbReference type="InterPro" id="IPR001093">
    <property type="entry name" value="IMP_DH_GMPRt"/>
</dbReference>
<dbReference type="NCBIfam" id="TIGR01302">
    <property type="entry name" value="IMP_dehydrog"/>
    <property type="match status" value="1"/>
</dbReference>
<dbReference type="PANTHER" id="PTHR11911:SF111">
    <property type="entry name" value="INOSINE-5'-MONOPHOSPHATE DEHYDROGENASE"/>
    <property type="match status" value="1"/>
</dbReference>
<dbReference type="PANTHER" id="PTHR11911">
    <property type="entry name" value="INOSINE-5-MONOPHOSPHATE DEHYDROGENASE RELATED"/>
    <property type="match status" value="1"/>
</dbReference>
<dbReference type="Pfam" id="PF00571">
    <property type="entry name" value="CBS"/>
    <property type="match status" value="2"/>
</dbReference>
<dbReference type="Pfam" id="PF00478">
    <property type="entry name" value="IMPDH"/>
    <property type="match status" value="2"/>
</dbReference>
<dbReference type="PIRSF" id="PIRSF000130">
    <property type="entry name" value="IMPDH"/>
    <property type="match status" value="1"/>
</dbReference>
<dbReference type="SMART" id="SM00116">
    <property type="entry name" value="CBS"/>
    <property type="match status" value="2"/>
</dbReference>
<dbReference type="SMART" id="SM01240">
    <property type="entry name" value="IMPDH"/>
    <property type="match status" value="1"/>
</dbReference>
<dbReference type="SUPFAM" id="SSF54631">
    <property type="entry name" value="CBS-domain pair"/>
    <property type="match status" value="1"/>
</dbReference>
<dbReference type="SUPFAM" id="SSF51412">
    <property type="entry name" value="Inosine monophosphate dehydrogenase (IMPDH)"/>
    <property type="match status" value="1"/>
</dbReference>
<dbReference type="PROSITE" id="PS51371">
    <property type="entry name" value="CBS"/>
    <property type="match status" value="2"/>
</dbReference>
<dbReference type="PROSITE" id="PS00487">
    <property type="entry name" value="IMP_DH_GMP_RED"/>
    <property type="match status" value="1"/>
</dbReference>
<evidence type="ECO:0000255" key="1">
    <source>
        <dbReference type="HAMAP-Rule" id="MF_03156"/>
    </source>
</evidence>
<evidence type="ECO:0000256" key="2">
    <source>
        <dbReference type="SAM" id="MobiDB-lite"/>
    </source>
</evidence>
<evidence type="ECO:0000269" key="3">
    <source>
    </source>
</evidence>
<evidence type="ECO:0000303" key="4">
    <source>
    </source>
</evidence>
<evidence type="ECO:0000305" key="5"/>
<sequence>MADGWDAEKIFNTTVFGFTYDDLILMPGHIDFGVNDVDLSTRITRNLHVRTPIVSSPMDTVTEHRMAIGCALMGGMGVIHNNMETARQVAEVQKVKRYENGFILDPFVLRPSDSVADVYRIKEKYGYSSVPITDTGMLGGKLLGIVTSRDIDFLTDVHTPLSEVMTSDLVVGHEPVQLAEANELLRESKKGKLPIVNDNFELVALISRNDLKKNREFPLASKDSNKQLLVGAAVSTKPHDIERAKALQEAGADVLVVDSSQGDSIYQVDLVKRLKAAFPELQIIGGNVVTARQAKSLIDAGVDGLRIGMGSGSICTTQVVCAVGRAQATAVYHVCKYAREHGDVPCIADGGIQNSGHVMKALALGANAVMMGSMLAGTEEAPGEYYFHNGVRVKTYRGMGSLDAMRAGTRRTASPPARGLRSPEASPSTAASSGGASRASALSEASPSAKSEASRTSTSTGSAARYFAENQTIRVAQGVSGCVVDKGTVMQLIPYVIQGVKHGMQDIGARTLRDLHAQLVGGELRFDVRSGAAQREGDVHDLHSFERKLYA</sequence>
<proteinExistence type="evidence at protein level"/>
<protein>
    <recommendedName>
        <fullName evidence="1">Inosine-5'-monophosphate dehydrogenase</fullName>
        <shortName evidence="1">IMP dehydrogenase</shortName>
        <shortName evidence="1">IMPD</shortName>
        <shortName evidence="1">IMPDH</shortName>
        <ecNumber evidence="1">1.1.1.205</ecNumber>
    </recommendedName>
</protein>
<organism>
    <name type="scientific">Toxoplasma gondii</name>
    <dbReference type="NCBI Taxonomy" id="5811"/>
    <lineage>
        <taxon>Eukaryota</taxon>
        <taxon>Sar</taxon>
        <taxon>Alveolata</taxon>
        <taxon>Apicomplexa</taxon>
        <taxon>Conoidasida</taxon>
        <taxon>Coccidia</taxon>
        <taxon>Eucoccidiorida</taxon>
        <taxon>Eimeriorina</taxon>
        <taxon>Sarcocystidae</taxon>
        <taxon>Toxoplasma</taxon>
    </lineage>
</organism>
<comment type="function">
    <text evidence="1 3">Catalyzes the conversion of inosine 5'-phosphate (IMP) to xanthosine 5'-phosphate (XMP), the first committed and rate-limiting step in the de novo synthesis of guanine nucleotides, and therefore plays an important role in the regulation of cell growth.</text>
</comment>
<comment type="catalytic activity">
    <reaction evidence="1">
        <text>IMP + NAD(+) + H2O = XMP + NADH + H(+)</text>
        <dbReference type="Rhea" id="RHEA:11708"/>
        <dbReference type="ChEBI" id="CHEBI:15377"/>
        <dbReference type="ChEBI" id="CHEBI:15378"/>
        <dbReference type="ChEBI" id="CHEBI:57464"/>
        <dbReference type="ChEBI" id="CHEBI:57540"/>
        <dbReference type="ChEBI" id="CHEBI:57945"/>
        <dbReference type="ChEBI" id="CHEBI:58053"/>
        <dbReference type="EC" id="1.1.1.205"/>
    </reaction>
</comment>
<comment type="cofactor">
    <cofactor evidence="1">
        <name>K(+)</name>
        <dbReference type="ChEBI" id="CHEBI:29103"/>
    </cofactor>
</comment>
<comment type="activity regulation">
    <text evidence="1 3">Mycophenolic acid (MPA) is a non-competitive inhibitor that prevents formation of the closed enzyme conformation by binding to the same site as the amobile flap. In contrast, mizoribine monophosphate (MZP) is a competitive inhibitor that induces the closed conformation. MPA is a potent inhibitor of mammalian IMPDHs but a poor inhibitor of the bacterial enzymes. MZP is a more potent inhibitor of bacterial IMPDH. Potently inhibited by MPA and adenine dinucleotide analogs such as thiazole-4-carboxamide adenine dinucleotide (TAD).</text>
</comment>
<comment type="biophysicochemical properties">
    <kinetics>
        <KM evidence="3">144 uM for NAD(+)</KM>
    </kinetics>
</comment>
<comment type="pathway">
    <text evidence="1">Purine metabolism; XMP biosynthesis via de novo pathway; XMP from IMP: step 1/1.</text>
</comment>
<comment type="subunit">
    <text evidence="1">Homotetramer.</text>
</comment>
<comment type="subcellular location">
    <subcellularLocation>
        <location evidence="1 3">Cytoplasm</location>
    </subcellularLocation>
</comment>
<comment type="alternative products">
    <event type="alternative splicing"/>
    <isoform>
        <id>Q4VRV8-1</id>
        <name>TgIMPDH</name>
        <sequence type="displayed"/>
    </isoform>
    <isoform>
        <id>Q4VRV8-2</id>
        <name>TgIMPDH-S</name>
        <sequence type="described" ref="VSP_042319"/>
    </isoform>
</comment>
<comment type="miscellaneous">
    <molecule>Isoform TgIMPDH-S</molecule>
    <text evidence="5">Lacks the active-site flap.</text>
</comment>
<comment type="similarity">
    <text evidence="1">Belongs to the IMPDH/GMPR family.</text>
</comment>
<accession>Q4VRV8</accession>
<accession>Q4VRV6</accession>
<reference key="1">
    <citation type="journal article" date="2005" name="Antimicrob. Agents Chemother.">
        <title>IMP dehydrogenase from the protozoan parasite Toxoplasma gondii.</title>
        <authorList>
            <person name="Sullivan W.J. Jr."/>
            <person name="Dixon S.E."/>
            <person name="Li C."/>
            <person name="Striepen B."/>
            <person name="Queener S.F."/>
        </authorList>
    </citation>
    <scope>NUCLEOTIDE SEQUENCE [MRNA] (ISOFORMS TGIMPDH AND TGIMPDH-S)</scope>
    <scope>FUNCTION</scope>
    <scope>BIOPHYSICOCHEMICAL PROPERTIES</scope>
    <scope>SUBCELLULAR LOCATION</scope>
    <scope>ACTIVITY REGULATION</scope>
    <source>
        <strain>RH</strain>
    </source>
</reference>
<feature type="chain" id="PRO_0000415683" description="Inosine-5'-monophosphate dehydrogenase">
    <location>
        <begin position="1"/>
        <end position="551"/>
    </location>
</feature>
<feature type="domain" description="CBS 1" evidence="1">
    <location>
        <begin position="102"/>
        <end position="163"/>
    </location>
</feature>
<feature type="domain" description="CBS 2" evidence="1">
    <location>
        <begin position="165"/>
        <end position="221"/>
    </location>
</feature>
<feature type="region of interest" description="Disordered" evidence="2">
    <location>
        <begin position="407"/>
        <end position="462"/>
    </location>
</feature>
<feature type="compositionally biased region" description="Low complexity" evidence="2">
    <location>
        <begin position="422"/>
        <end position="462"/>
    </location>
</feature>
<feature type="active site" description="Thioimidate intermediate" evidence="1">
    <location>
        <position position="315"/>
    </location>
</feature>
<feature type="active site" description="Proton acceptor" evidence="1">
    <location>
        <position position="465"/>
    </location>
</feature>
<feature type="binding site" evidence="1">
    <location>
        <begin position="258"/>
        <end position="260"/>
    </location>
    <ligand>
        <name>NAD(+)</name>
        <dbReference type="ChEBI" id="CHEBI:57540"/>
    </ligand>
</feature>
<feature type="binding site" evidence="1">
    <location>
        <begin position="308"/>
        <end position="310"/>
    </location>
    <ligand>
        <name>NAD(+)</name>
        <dbReference type="ChEBI" id="CHEBI:57540"/>
    </ligand>
</feature>
<feature type="binding site" description="in other chain" evidence="1">
    <location>
        <position position="310"/>
    </location>
    <ligand>
        <name>K(+)</name>
        <dbReference type="ChEBI" id="CHEBI:29103"/>
        <note>ligand shared between two tetrameric partners</note>
    </ligand>
</feature>
<feature type="binding site" description="in other chain" evidence="1">
    <location>
        <position position="312"/>
    </location>
    <ligand>
        <name>K(+)</name>
        <dbReference type="ChEBI" id="CHEBI:29103"/>
        <note>ligand shared between two tetrameric partners</note>
    </ligand>
</feature>
<feature type="binding site" evidence="1">
    <location>
        <position position="313"/>
    </location>
    <ligand>
        <name>IMP</name>
        <dbReference type="ChEBI" id="CHEBI:58053"/>
    </ligand>
</feature>
<feature type="binding site" description="in other chain" evidence="1">
    <location>
        <position position="315"/>
    </location>
    <ligand>
        <name>K(+)</name>
        <dbReference type="ChEBI" id="CHEBI:29103"/>
        <note>ligand shared between two tetrameric partners</note>
    </ligand>
</feature>
<feature type="binding site" evidence="1">
    <location>
        <begin position="349"/>
        <end position="351"/>
    </location>
    <ligand>
        <name>IMP</name>
        <dbReference type="ChEBI" id="CHEBI:58053"/>
    </ligand>
</feature>
<feature type="binding site" evidence="1">
    <location>
        <begin position="372"/>
        <end position="373"/>
    </location>
    <ligand>
        <name>IMP</name>
        <dbReference type="ChEBI" id="CHEBI:58053"/>
    </ligand>
</feature>
<feature type="binding site" evidence="1">
    <location>
        <begin position="396"/>
        <end position="400"/>
    </location>
    <ligand>
        <name>IMP</name>
        <dbReference type="ChEBI" id="CHEBI:58053"/>
    </ligand>
</feature>
<feature type="binding site" evidence="1">
    <location>
        <position position="477"/>
    </location>
    <ligand>
        <name>IMP</name>
        <dbReference type="ChEBI" id="CHEBI:58053"/>
    </ligand>
</feature>
<feature type="binding site" evidence="1">
    <location>
        <position position="536"/>
    </location>
    <ligand>
        <name>K(+)</name>
        <dbReference type="ChEBI" id="CHEBI:29103"/>
        <note>ligand shared between two tetrameric partners</note>
    </ligand>
</feature>
<feature type="binding site" evidence="1">
    <location>
        <position position="537"/>
    </location>
    <ligand>
        <name>K(+)</name>
        <dbReference type="ChEBI" id="CHEBI:29103"/>
        <note>ligand shared between two tetrameric partners</note>
    </ligand>
</feature>
<feature type="splice variant" id="VSP_042319" description="In isoform TgIMPDH-S." evidence="4">
    <original>ALALGANAVMMGSMLAGTEEAPGEYYFHNGVRVKTYRGMGSLDAMRAGTRRTASPPARGLRSPEASPSTAASSGGASRASALSEASPSAKSEASRTSTSTGSAARYFAENQTIRVAQGVSGCVVDKGTVMQLIPYVIQGVKHGMQDIGARTLRDLHAQLVGGELRFDVRSGAAQREGDVHDLHSFERKLYA</original>
    <variation>VWRCAEGRRCS</variation>
    <location>
        <begin position="361"/>
        <end position="551"/>
    </location>
</feature>